<feature type="chain" id="PRO_1000202186" description="UDP-N-acetylmuramate--L-alanine ligase">
    <location>
        <begin position="1"/>
        <end position="481"/>
    </location>
</feature>
<feature type="binding site" evidence="1">
    <location>
        <begin position="123"/>
        <end position="129"/>
    </location>
    <ligand>
        <name>ATP</name>
        <dbReference type="ChEBI" id="CHEBI:30616"/>
    </ligand>
</feature>
<reference key="1">
    <citation type="journal article" date="2009" name="Genome Biol.">
        <title>Genomic and genetic analyses of diversity and plant interactions of Pseudomonas fluorescens.</title>
        <authorList>
            <person name="Silby M.W."/>
            <person name="Cerdeno-Tarraga A.M."/>
            <person name="Vernikos G.S."/>
            <person name="Giddens S.R."/>
            <person name="Jackson R.W."/>
            <person name="Preston G.M."/>
            <person name="Zhang X.-X."/>
            <person name="Moon C.D."/>
            <person name="Gehrig S.M."/>
            <person name="Godfrey S.A.C."/>
            <person name="Knight C.G."/>
            <person name="Malone J.G."/>
            <person name="Robinson Z."/>
            <person name="Spiers A.J."/>
            <person name="Harris S."/>
            <person name="Challis G.L."/>
            <person name="Yaxley A.M."/>
            <person name="Harris D."/>
            <person name="Seeger K."/>
            <person name="Murphy L."/>
            <person name="Rutter S."/>
            <person name="Squares R."/>
            <person name="Quail M.A."/>
            <person name="Saunders E."/>
            <person name="Mavromatis K."/>
            <person name="Brettin T.S."/>
            <person name="Bentley S.D."/>
            <person name="Hothersall J."/>
            <person name="Stephens E."/>
            <person name="Thomas C.M."/>
            <person name="Parkhill J."/>
            <person name="Levy S.B."/>
            <person name="Rainey P.B."/>
            <person name="Thomson N.R."/>
        </authorList>
    </citation>
    <scope>NUCLEOTIDE SEQUENCE [LARGE SCALE GENOMIC DNA]</scope>
    <source>
        <strain>SBW25</strain>
    </source>
</reference>
<protein>
    <recommendedName>
        <fullName evidence="1">UDP-N-acetylmuramate--L-alanine ligase</fullName>
        <ecNumber evidence="1">6.3.2.8</ecNumber>
    </recommendedName>
    <alternativeName>
        <fullName evidence="1">UDP-N-acetylmuramoyl-L-alanine synthetase</fullName>
    </alternativeName>
</protein>
<evidence type="ECO:0000255" key="1">
    <source>
        <dbReference type="HAMAP-Rule" id="MF_00046"/>
    </source>
</evidence>
<dbReference type="EC" id="6.3.2.8" evidence="1"/>
<dbReference type="EMBL" id="AM181176">
    <property type="protein sequence ID" value="CAY47214.1"/>
    <property type="molecule type" value="Genomic_DNA"/>
</dbReference>
<dbReference type="RefSeq" id="WP_012722297.1">
    <property type="nucleotide sequence ID" value="NC_012660.1"/>
</dbReference>
<dbReference type="SMR" id="C3KCT1"/>
<dbReference type="STRING" id="294.SRM1_04720"/>
<dbReference type="GeneID" id="93462569"/>
<dbReference type="eggNOG" id="COG0773">
    <property type="taxonomic scope" value="Bacteria"/>
</dbReference>
<dbReference type="HOGENOM" id="CLU_028104_2_2_6"/>
<dbReference type="OrthoDB" id="9804126at2"/>
<dbReference type="UniPathway" id="UPA00219"/>
<dbReference type="GO" id="GO:0005737">
    <property type="term" value="C:cytoplasm"/>
    <property type="evidence" value="ECO:0007669"/>
    <property type="project" value="UniProtKB-SubCell"/>
</dbReference>
<dbReference type="GO" id="GO:0005524">
    <property type="term" value="F:ATP binding"/>
    <property type="evidence" value="ECO:0007669"/>
    <property type="project" value="UniProtKB-UniRule"/>
</dbReference>
<dbReference type="GO" id="GO:0008763">
    <property type="term" value="F:UDP-N-acetylmuramate-L-alanine ligase activity"/>
    <property type="evidence" value="ECO:0007669"/>
    <property type="project" value="UniProtKB-UniRule"/>
</dbReference>
<dbReference type="GO" id="GO:0051301">
    <property type="term" value="P:cell division"/>
    <property type="evidence" value="ECO:0007669"/>
    <property type="project" value="UniProtKB-KW"/>
</dbReference>
<dbReference type="GO" id="GO:0071555">
    <property type="term" value="P:cell wall organization"/>
    <property type="evidence" value="ECO:0007669"/>
    <property type="project" value="UniProtKB-KW"/>
</dbReference>
<dbReference type="GO" id="GO:0009252">
    <property type="term" value="P:peptidoglycan biosynthetic process"/>
    <property type="evidence" value="ECO:0007669"/>
    <property type="project" value="UniProtKB-UniRule"/>
</dbReference>
<dbReference type="GO" id="GO:0008360">
    <property type="term" value="P:regulation of cell shape"/>
    <property type="evidence" value="ECO:0007669"/>
    <property type="project" value="UniProtKB-KW"/>
</dbReference>
<dbReference type="FunFam" id="3.40.1190.10:FF:000001">
    <property type="entry name" value="UDP-N-acetylmuramate--L-alanine ligase"/>
    <property type="match status" value="1"/>
</dbReference>
<dbReference type="FunFam" id="3.40.50.720:FF:000046">
    <property type="entry name" value="UDP-N-acetylmuramate--L-alanine ligase"/>
    <property type="match status" value="1"/>
</dbReference>
<dbReference type="Gene3D" id="3.90.190.20">
    <property type="entry name" value="Mur ligase, C-terminal domain"/>
    <property type="match status" value="1"/>
</dbReference>
<dbReference type="Gene3D" id="3.40.1190.10">
    <property type="entry name" value="Mur-like, catalytic domain"/>
    <property type="match status" value="1"/>
</dbReference>
<dbReference type="Gene3D" id="3.40.50.720">
    <property type="entry name" value="NAD(P)-binding Rossmann-like Domain"/>
    <property type="match status" value="1"/>
</dbReference>
<dbReference type="HAMAP" id="MF_00046">
    <property type="entry name" value="MurC"/>
    <property type="match status" value="1"/>
</dbReference>
<dbReference type="InterPro" id="IPR036565">
    <property type="entry name" value="Mur-like_cat_sf"/>
</dbReference>
<dbReference type="InterPro" id="IPR004101">
    <property type="entry name" value="Mur_ligase_C"/>
</dbReference>
<dbReference type="InterPro" id="IPR036615">
    <property type="entry name" value="Mur_ligase_C_dom_sf"/>
</dbReference>
<dbReference type="InterPro" id="IPR013221">
    <property type="entry name" value="Mur_ligase_cen"/>
</dbReference>
<dbReference type="InterPro" id="IPR000713">
    <property type="entry name" value="Mur_ligase_N"/>
</dbReference>
<dbReference type="InterPro" id="IPR050061">
    <property type="entry name" value="MurCDEF_pg_biosynth"/>
</dbReference>
<dbReference type="InterPro" id="IPR005758">
    <property type="entry name" value="UDP-N-AcMur_Ala_ligase_MurC"/>
</dbReference>
<dbReference type="NCBIfam" id="TIGR01082">
    <property type="entry name" value="murC"/>
    <property type="match status" value="1"/>
</dbReference>
<dbReference type="PANTHER" id="PTHR43445:SF3">
    <property type="entry name" value="UDP-N-ACETYLMURAMATE--L-ALANINE LIGASE"/>
    <property type="match status" value="1"/>
</dbReference>
<dbReference type="PANTHER" id="PTHR43445">
    <property type="entry name" value="UDP-N-ACETYLMURAMATE--L-ALANINE LIGASE-RELATED"/>
    <property type="match status" value="1"/>
</dbReference>
<dbReference type="Pfam" id="PF01225">
    <property type="entry name" value="Mur_ligase"/>
    <property type="match status" value="1"/>
</dbReference>
<dbReference type="Pfam" id="PF02875">
    <property type="entry name" value="Mur_ligase_C"/>
    <property type="match status" value="1"/>
</dbReference>
<dbReference type="Pfam" id="PF08245">
    <property type="entry name" value="Mur_ligase_M"/>
    <property type="match status" value="1"/>
</dbReference>
<dbReference type="SUPFAM" id="SSF51984">
    <property type="entry name" value="MurCD N-terminal domain"/>
    <property type="match status" value="1"/>
</dbReference>
<dbReference type="SUPFAM" id="SSF53623">
    <property type="entry name" value="MurD-like peptide ligases, catalytic domain"/>
    <property type="match status" value="1"/>
</dbReference>
<dbReference type="SUPFAM" id="SSF53244">
    <property type="entry name" value="MurD-like peptide ligases, peptide-binding domain"/>
    <property type="match status" value="1"/>
</dbReference>
<keyword id="KW-0067">ATP-binding</keyword>
<keyword id="KW-0131">Cell cycle</keyword>
<keyword id="KW-0132">Cell division</keyword>
<keyword id="KW-0133">Cell shape</keyword>
<keyword id="KW-0961">Cell wall biogenesis/degradation</keyword>
<keyword id="KW-0963">Cytoplasm</keyword>
<keyword id="KW-0436">Ligase</keyword>
<keyword id="KW-0547">Nucleotide-binding</keyword>
<keyword id="KW-0573">Peptidoglycan synthesis</keyword>
<accession>C3KCT1</accession>
<name>MURC_PSEFS</name>
<comment type="function">
    <text evidence="1">Cell wall formation.</text>
</comment>
<comment type="catalytic activity">
    <reaction evidence="1">
        <text>UDP-N-acetyl-alpha-D-muramate + L-alanine + ATP = UDP-N-acetyl-alpha-D-muramoyl-L-alanine + ADP + phosphate + H(+)</text>
        <dbReference type="Rhea" id="RHEA:23372"/>
        <dbReference type="ChEBI" id="CHEBI:15378"/>
        <dbReference type="ChEBI" id="CHEBI:30616"/>
        <dbReference type="ChEBI" id="CHEBI:43474"/>
        <dbReference type="ChEBI" id="CHEBI:57972"/>
        <dbReference type="ChEBI" id="CHEBI:70757"/>
        <dbReference type="ChEBI" id="CHEBI:83898"/>
        <dbReference type="ChEBI" id="CHEBI:456216"/>
        <dbReference type="EC" id="6.3.2.8"/>
    </reaction>
</comment>
<comment type="pathway">
    <text evidence="1">Cell wall biogenesis; peptidoglycan biosynthesis.</text>
</comment>
<comment type="subcellular location">
    <subcellularLocation>
        <location evidence="1">Cytoplasm</location>
    </subcellularLocation>
</comment>
<comment type="similarity">
    <text evidence="1">Belongs to the MurCDEF family.</text>
</comment>
<organism>
    <name type="scientific">Pseudomonas fluorescens (strain SBW25)</name>
    <dbReference type="NCBI Taxonomy" id="216595"/>
    <lineage>
        <taxon>Bacteria</taxon>
        <taxon>Pseudomonadati</taxon>
        <taxon>Pseudomonadota</taxon>
        <taxon>Gammaproteobacteria</taxon>
        <taxon>Pseudomonadales</taxon>
        <taxon>Pseudomonadaceae</taxon>
        <taxon>Pseudomonas</taxon>
    </lineage>
</organism>
<proteinExistence type="inferred from homology"/>
<sequence length="481" mass="52165">MVENQKAMPQPEMRRIRRIHFVGIGGVGMCGIAEVLLNLGYQVSGSDLKESPVTDRLKSFGAQIFIGHRAENAAEADVLVVSSAVNTSNPEVATALERRIPVVPRAEMLAELMRYRHGIAVAGTHGKTTTTSLIASVFAAGGLDPTFVIGGRLNAAGTNAQLGTSRYLIAEADESDASFLHLQPLVAVVTNIDADHMATYDGDFNKLKKTFVEFLHNLPFYGLAVVCLDDPVVREILPQVKRPTVTYGFSEDADVRAINVRQEGMQTYFTVLRPDREPLDVSVNMPGNHNVLNSLATICIATDEGVSDEAIVEGLSRFAGVGRRFQVYGQLPVEGGDVMLVDDYGHHPTEVAAVIKAVRGGWPERRLVMVYQPHRYSRTRDLYDDFVNVLADANVLLLMEVYPAGEEPIPGADSRKLCNSIRQRGQLDPIYIERGVDLAPIVKPLLRAGDILLCQGAGDIGGLAPKLLASPLFAAAQGKSK</sequence>
<gene>
    <name evidence="1" type="primary">murC</name>
    <name type="ordered locus">PFLU_0948</name>
</gene>